<organism>
    <name type="scientific">Ricinus communis</name>
    <name type="common">Castor bean</name>
    <dbReference type="NCBI Taxonomy" id="3988"/>
    <lineage>
        <taxon>Eukaryota</taxon>
        <taxon>Viridiplantae</taxon>
        <taxon>Streptophyta</taxon>
        <taxon>Embryophyta</taxon>
        <taxon>Tracheophyta</taxon>
        <taxon>Spermatophyta</taxon>
        <taxon>Magnoliopsida</taxon>
        <taxon>eudicotyledons</taxon>
        <taxon>Gunneridae</taxon>
        <taxon>Pentapetalae</taxon>
        <taxon>rosids</taxon>
        <taxon>fabids</taxon>
        <taxon>Malpighiales</taxon>
        <taxon>Euphorbiaceae</taxon>
        <taxon>Acalyphoideae</taxon>
        <taxon>Acalypheae</taxon>
        <taxon>Ricinus</taxon>
    </lineage>
</organism>
<sequence>MITSIATTTAGAFEVKSLGFIPYPSQPKRIFFMAQVIFRILAIAFAVASISAMVTSDQNVIVFGMDTAARYSYSSAFRFLVGANAVVCGFSVLSLIFVCLMSRRSEAILEKNYYLFLHDMVMMVMMVSGCSAATAIGYVGRYGEKEITWTAVCDFVGKFCNQALVSIVLAYLALFCYVALTTLAAHKLNHSSSTAAIRQNE</sequence>
<protein>
    <recommendedName>
        <fullName>CASP-like protein 1F2</fullName>
        <shortName>RcCASPL1F2</shortName>
    </recommendedName>
</protein>
<dbReference type="EMBL" id="EQ973778">
    <property type="protein sequence ID" value="EEF49379.1"/>
    <property type="molecule type" value="Genomic_DNA"/>
</dbReference>
<dbReference type="STRING" id="3988.B9RH17"/>
<dbReference type="eggNOG" id="ENOG502S695">
    <property type="taxonomic scope" value="Eukaryota"/>
</dbReference>
<dbReference type="InParanoid" id="B9RH17"/>
<dbReference type="Proteomes" id="UP000008311">
    <property type="component" value="Unassembled WGS sequence"/>
</dbReference>
<dbReference type="GO" id="GO:0005886">
    <property type="term" value="C:plasma membrane"/>
    <property type="evidence" value="ECO:0007669"/>
    <property type="project" value="UniProtKB-SubCell"/>
</dbReference>
<dbReference type="InterPro" id="IPR006459">
    <property type="entry name" value="CASP/CASPL"/>
</dbReference>
<dbReference type="InterPro" id="IPR006702">
    <property type="entry name" value="CASP_dom"/>
</dbReference>
<dbReference type="InterPro" id="IPR044173">
    <property type="entry name" value="CASPL"/>
</dbReference>
<dbReference type="NCBIfam" id="TIGR01569">
    <property type="entry name" value="A_tha_TIGR01569"/>
    <property type="match status" value="1"/>
</dbReference>
<dbReference type="PANTHER" id="PTHR36488">
    <property type="entry name" value="CASP-LIKE PROTEIN 1U1"/>
    <property type="match status" value="1"/>
</dbReference>
<dbReference type="PANTHER" id="PTHR36488:SF8">
    <property type="entry name" value="CASP-LIKE PROTEIN 1U1"/>
    <property type="match status" value="1"/>
</dbReference>
<dbReference type="Pfam" id="PF04535">
    <property type="entry name" value="CASP_dom"/>
    <property type="match status" value="1"/>
</dbReference>
<comment type="subunit">
    <text evidence="1">Homodimer and heterodimers.</text>
</comment>
<comment type="subcellular location">
    <subcellularLocation>
        <location evidence="1">Cell membrane</location>
        <topology evidence="1">Multi-pass membrane protein</topology>
    </subcellularLocation>
</comment>
<comment type="similarity">
    <text evidence="3">Belongs to the Casparian strip membrane proteins (CASP) family.</text>
</comment>
<gene>
    <name type="ORF">RCOM_1446020</name>
</gene>
<keyword id="KW-1003">Cell membrane</keyword>
<keyword id="KW-0472">Membrane</keyword>
<keyword id="KW-1185">Reference proteome</keyword>
<keyword id="KW-0812">Transmembrane</keyword>
<keyword id="KW-1133">Transmembrane helix</keyword>
<evidence type="ECO:0000250" key="1"/>
<evidence type="ECO:0000255" key="2"/>
<evidence type="ECO:0000305" key="3"/>
<feature type="chain" id="PRO_0000391565" description="CASP-like protein 1F2">
    <location>
        <begin position="1"/>
        <end position="201"/>
    </location>
</feature>
<feature type="topological domain" description="Cytoplasmic" evidence="2">
    <location>
        <begin position="1"/>
        <end position="29"/>
    </location>
</feature>
<feature type="transmembrane region" description="Helical" evidence="2">
    <location>
        <begin position="30"/>
        <end position="50"/>
    </location>
</feature>
<feature type="topological domain" description="Extracellular" evidence="2">
    <location>
        <begin position="51"/>
        <end position="78"/>
    </location>
</feature>
<feature type="transmembrane region" description="Helical" evidence="2">
    <location>
        <begin position="79"/>
        <end position="99"/>
    </location>
</feature>
<feature type="topological domain" description="Cytoplasmic" evidence="2">
    <location>
        <begin position="100"/>
        <end position="119"/>
    </location>
</feature>
<feature type="transmembrane region" description="Helical" evidence="2">
    <location>
        <begin position="120"/>
        <end position="140"/>
    </location>
</feature>
<feature type="topological domain" description="Extracellular" evidence="2">
    <location>
        <begin position="141"/>
        <end position="162"/>
    </location>
</feature>
<feature type="transmembrane region" description="Helical" evidence="2">
    <location>
        <begin position="163"/>
        <end position="183"/>
    </location>
</feature>
<feature type="topological domain" description="Cytoplasmic" evidence="2">
    <location>
        <begin position="184"/>
        <end position="201"/>
    </location>
</feature>
<proteinExistence type="evidence at transcript level"/>
<name>CSPLA_RICCO</name>
<reference key="1">
    <citation type="journal article" date="2010" name="Nat. Biotechnol.">
        <title>Draft genome sequence of the oilseed species Ricinus communis.</title>
        <authorList>
            <person name="Chan A.P."/>
            <person name="Crabtree J."/>
            <person name="Zhao Q."/>
            <person name="Lorenzi H."/>
            <person name="Orvis J."/>
            <person name="Puiu D."/>
            <person name="Melake-Berhan A."/>
            <person name="Jones K.M."/>
            <person name="Redman J."/>
            <person name="Chen G."/>
            <person name="Cahoon E.B."/>
            <person name="Gedil M."/>
            <person name="Stanke M."/>
            <person name="Haas B.J."/>
            <person name="Wortman J.R."/>
            <person name="Fraser-Liggett C.M."/>
            <person name="Ravel J."/>
            <person name="Rabinowicz P.D."/>
        </authorList>
    </citation>
    <scope>NUCLEOTIDE SEQUENCE [LARGE SCALE GENOMIC DNA]</scope>
    <source>
        <strain>cv. Hale</strain>
    </source>
</reference>
<reference key="2">
    <citation type="journal article" date="2014" name="Plant Physiol.">
        <title>Functional and evolutionary analysis of the CASPARIAN STRIP MEMBRANE DOMAIN PROTEIN family.</title>
        <authorList>
            <person name="Roppolo D."/>
            <person name="Boeckmann B."/>
            <person name="Pfister A."/>
            <person name="Boutet E."/>
            <person name="Rubio M.C."/>
            <person name="Denervaud-Tendon V."/>
            <person name="Vermeer J.E."/>
            <person name="Gheyselinck J."/>
            <person name="Xenarios I."/>
            <person name="Geldner N."/>
        </authorList>
    </citation>
    <scope>GENE FAMILY</scope>
    <scope>NOMENCLATURE</scope>
</reference>
<accession>B9RH17</accession>